<keyword id="KW-0963">Cytoplasm</keyword>
<keyword id="KW-0227">DNA damage</keyword>
<keyword id="KW-0233">DNA recombination</keyword>
<keyword id="KW-0234">DNA repair</keyword>
<keyword id="KW-0238">DNA-binding</keyword>
<keyword id="KW-0255">Endonuclease</keyword>
<keyword id="KW-0378">Hydrolase</keyword>
<keyword id="KW-0460">Magnesium</keyword>
<keyword id="KW-0479">Metal-binding</keyword>
<keyword id="KW-0540">Nuclease</keyword>
<organism>
    <name type="scientific">Pseudarthrobacter chlorophenolicus (strain ATCC 700700 / DSM 12829 / CIP 107037 / JCM 12360 / KCTC 9906 / NCIMB 13794 / A6)</name>
    <name type="common">Arthrobacter chlorophenolicus</name>
    <dbReference type="NCBI Taxonomy" id="452863"/>
    <lineage>
        <taxon>Bacteria</taxon>
        <taxon>Bacillati</taxon>
        <taxon>Actinomycetota</taxon>
        <taxon>Actinomycetes</taxon>
        <taxon>Micrococcales</taxon>
        <taxon>Micrococcaceae</taxon>
        <taxon>Pseudarthrobacter</taxon>
    </lineage>
</organism>
<dbReference type="EC" id="3.1.21.10" evidence="1"/>
<dbReference type="EMBL" id="CP001341">
    <property type="protein sequence ID" value="ACL40007.1"/>
    <property type="molecule type" value="Genomic_DNA"/>
</dbReference>
<dbReference type="RefSeq" id="WP_015937225.1">
    <property type="nucleotide sequence ID" value="NC_011886.1"/>
</dbReference>
<dbReference type="SMR" id="B8H9D8"/>
<dbReference type="STRING" id="452863.Achl_2033"/>
<dbReference type="KEGG" id="ach:Achl_2033"/>
<dbReference type="eggNOG" id="COG0817">
    <property type="taxonomic scope" value="Bacteria"/>
</dbReference>
<dbReference type="HOGENOM" id="CLU_091257_0_2_11"/>
<dbReference type="OrthoDB" id="9805499at2"/>
<dbReference type="Proteomes" id="UP000002505">
    <property type="component" value="Chromosome"/>
</dbReference>
<dbReference type="GO" id="GO:0005737">
    <property type="term" value="C:cytoplasm"/>
    <property type="evidence" value="ECO:0007669"/>
    <property type="project" value="UniProtKB-SubCell"/>
</dbReference>
<dbReference type="GO" id="GO:0048476">
    <property type="term" value="C:Holliday junction resolvase complex"/>
    <property type="evidence" value="ECO:0007669"/>
    <property type="project" value="UniProtKB-UniRule"/>
</dbReference>
<dbReference type="GO" id="GO:0008821">
    <property type="term" value="F:crossover junction DNA endonuclease activity"/>
    <property type="evidence" value="ECO:0007669"/>
    <property type="project" value="UniProtKB-UniRule"/>
</dbReference>
<dbReference type="GO" id="GO:0003677">
    <property type="term" value="F:DNA binding"/>
    <property type="evidence" value="ECO:0007669"/>
    <property type="project" value="UniProtKB-KW"/>
</dbReference>
<dbReference type="GO" id="GO:0000287">
    <property type="term" value="F:magnesium ion binding"/>
    <property type="evidence" value="ECO:0007669"/>
    <property type="project" value="UniProtKB-UniRule"/>
</dbReference>
<dbReference type="GO" id="GO:0006310">
    <property type="term" value="P:DNA recombination"/>
    <property type="evidence" value="ECO:0007669"/>
    <property type="project" value="UniProtKB-UniRule"/>
</dbReference>
<dbReference type="GO" id="GO:0006281">
    <property type="term" value="P:DNA repair"/>
    <property type="evidence" value="ECO:0007669"/>
    <property type="project" value="UniProtKB-UniRule"/>
</dbReference>
<dbReference type="CDD" id="cd16962">
    <property type="entry name" value="RuvC"/>
    <property type="match status" value="1"/>
</dbReference>
<dbReference type="FunFam" id="3.30.420.10:FF:000002">
    <property type="entry name" value="Crossover junction endodeoxyribonuclease RuvC"/>
    <property type="match status" value="1"/>
</dbReference>
<dbReference type="Gene3D" id="3.30.420.10">
    <property type="entry name" value="Ribonuclease H-like superfamily/Ribonuclease H"/>
    <property type="match status" value="1"/>
</dbReference>
<dbReference type="HAMAP" id="MF_00034">
    <property type="entry name" value="RuvC"/>
    <property type="match status" value="1"/>
</dbReference>
<dbReference type="InterPro" id="IPR012337">
    <property type="entry name" value="RNaseH-like_sf"/>
</dbReference>
<dbReference type="InterPro" id="IPR036397">
    <property type="entry name" value="RNaseH_sf"/>
</dbReference>
<dbReference type="InterPro" id="IPR002176">
    <property type="entry name" value="X-over_junc_endoDNase_RuvC"/>
</dbReference>
<dbReference type="NCBIfam" id="TIGR00228">
    <property type="entry name" value="ruvC"/>
    <property type="match status" value="1"/>
</dbReference>
<dbReference type="PANTHER" id="PTHR30194">
    <property type="entry name" value="CROSSOVER JUNCTION ENDODEOXYRIBONUCLEASE RUVC"/>
    <property type="match status" value="1"/>
</dbReference>
<dbReference type="PANTHER" id="PTHR30194:SF3">
    <property type="entry name" value="CROSSOVER JUNCTION ENDODEOXYRIBONUCLEASE RUVC"/>
    <property type="match status" value="1"/>
</dbReference>
<dbReference type="Pfam" id="PF02075">
    <property type="entry name" value="RuvC"/>
    <property type="match status" value="1"/>
</dbReference>
<dbReference type="PRINTS" id="PR00696">
    <property type="entry name" value="RSOLVASERUVC"/>
</dbReference>
<dbReference type="SUPFAM" id="SSF53098">
    <property type="entry name" value="Ribonuclease H-like"/>
    <property type="match status" value="1"/>
</dbReference>
<comment type="function">
    <text evidence="1">The RuvA-RuvB-RuvC complex processes Holliday junction (HJ) DNA during genetic recombination and DNA repair. Endonuclease that resolves HJ intermediates. Cleaves cruciform DNA by making single-stranded nicks across the HJ at symmetrical positions within the homologous arms, yielding a 5'-phosphate and a 3'-hydroxyl group; requires a central core of homology in the junction. The consensus cleavage sequence is 5'-(A/T)TT(C/G)-3'. Cleavage occurs on the 3'-side of the TT dinucleotide at the point of strand exchange. HJ branch migration catalyzed by RuvA-RuvB allows RuvC to scan DNA until it finds its consensus sequence, where it cleaves and resolves the cruciform DNA.</text>
</comment>
<comment type="catalytic activity">
    <reaction evidence="1">
        <text>Endonucleolytic cleavage at a junction such as a reciprocal single-stranded crossover between two homologous DNA duplexes (Holliday junction).</text>
        <dbReference type="EC" id="3.1.21.10"/>
    </reaction>
</comment>
<comment type="cofactor">
    <cofactor evidence="1">
        <name>Mg(2+)</name>
        <dbReference type="ChEBI" id="CHEBI:18420"/>
    </cofactor>
    <text evidence="1">Binds 2 Mg(2+) ion per subunit.</text>
</comment>
<comment type="subunit">
    <text evidence="1">Homodimer which binds Holliday junction (HJ) DNA. The HJ becomes 2-fold symmetrical on binding to RuvC with unstacked arms; it has a different conformation from HJ DNA in complex with RuvA. In the full resolvosome a probable DNA-RuvA(4)-RuvB(12)-RuvC(2) complex forms which resolves the HJ.</text>
</comment>
<comment type="subcellular location">
    <subcellularLocation>
        <location evidence="1">Cytoplasm</location>
    </subcellularLocation>
</comment>
<comment type="similarity">
    <text evidence="1">Belongs to the RuvC family.</text>
</comment>
<sequence>MTLRVLGVDPGLTRCGIGVVDVERNRRATMVAVGVVGTSPDESLDQRLLVIATAIDEWLDRYEPQVLAVERVFSQLNVSTVMGVAQASGVVIAAAARRGIPVALHTPSEVKAAVTGSGSSNKDAVTKLVTKILRLDAPPRPADAADALALAITHAWRAGSGASVATTGPGSSSLTPAQRAWAEAEAKARRAR</sequence>
<reference key="1">
    <citation type="submission" date="2009-01" db="EMBL/GenBank/DDBJ databases">
        <title>Complete sequence of chromosome of Arthrobacter chlorophenolicus A6.</title>
        <authorList>
            <consortium name="US DOE Joint Genome Institute"/>
            <person name="Lucas S."/>
            <person name="Copeland A."/>
            <person name="Lapidus A."/>
            <person name="Glavina del Rio T."/>
            <person name="Tice H."/>
            <person name="Bruce D."/>
            <person name="Goodwin L."/>
            <person name="Pitluck S."/>
            <person name="Goltsman E."/>
            <person name="Clum A."/>
            <person name="Larimer F."/>
            <person name="Land M."/>
            <person name="Hauser L."/>
            <person name="Kyrpides N."/>
            <person name="Mikhailova N."/>
            <person name="Jansson J."/>
            <person name="Richardson P."/>
        </authorList>
    </citation>
    <scope>NUCLEOTIDE SEQUENCE [LARGE SCALE GENOMIC DNA]</scope>
    <source>
        <strain>ATCC 700700 / DSM 12829 / CIP 107037 / JCM 12360 / KCTC 9906 / NCIMB 13794 / A6</strain>
    </source>
</reference>
<feature type="chain" id="PRO_1000195234" description="Crossover junction endodeoxyribonuclease RuvC">
    <location>
        <begin position="1"/>
        <end position="192"/>
    </location>
</feature>
<feature type="region of interest" description="Disordered" evidence="2">
    <location>
        <begin position="161"/>
        <end position="192"/>
    </location>
</feature>
<feature type="compositionally biased region" description="Polar residues" evidence="2">
    <location>
        <begin position="163"/>
        <end position="176"/>
    </location>
</feature>
<feature type="compositionally biased region" description="Basic and acidic residues" evidence="2">
    <location>
        <begin position="182"/>
        <end position="192"/>
    </location>
</feature>
<feature type="active site" evidence="1">
    <location>
        <position position="9"/>
    </location>
</feature>
<feature type="active site" evidence="1">
    <location>
        <position position="70"/>
    </location>
</feature>
<feature type="active site" evidence="1">
    <location>
        <position position="143"/>
    </location>
</feature>
<feature type="binding site" evidence="1">
    <location>
        <position position="9"/>
    </location>
    <ligand>
        <name>Mg(2+)</name>
        <dbReference type="ChEBI" id="CHEBI:18420"/>
        <label>1</label>
    </ligand>
</feature>
<feature type="binding site" evidence="1">
    <location>
        <position position="70"/>
    </location>
    <ligand>
        <name>Mg(2+)</name>
        <dbReference type="ChEBI" id="CHEBI:18420"/>
        <label>2</label>
    </ligand>
</feature>
<feature type="binding site" evidence="1">
    <location>
        <position position="143"/>
    </location>
    <ligand>
        <name>Mg(2+)</name>
        <dbReference type="ChEBI" id="CHEBI:18420"/>
        <label>1</label>
    </ligand>
</feature>
<evidence type="ECO:0000255" key="1">
    <source>
        <dbReference type="HAMAP-Rule" id="MF_00034"/>
    </source>
</evidence>
<evidence type="ECO:0000256" key="2">
    <source>
        <dbReference type="SAM" id="MobiDB-lite"/>
    </source>
</evidence>
<gene>
    <name evidence="1" type="primary">ruvC</name>
    <name type="ordered locus">Achl_2033</name>
</gene>
<name>RUVC_PSECP</name>
<protein>
    <recommendedName>
        <fullName evidence="1">Crossover junction endodeoxyribonuclease RuvC</fullName>
        <ecNumber evidence="1">3.1.21.10</ecNumber>
    </recommendedName>
    <alternativeName>
        <fullName evidence="1">Holliday junction nuclease RuvC</fullName>
    </alternativeName>
    <alternativeName>
        <fullName evidence="1">Holliday junction resolvase RuvC</fullName>
    </alternativeName>
</protein>
<proteinExistence type="inferred from homology"/>
<accession>B8H9D8</accession>